<gene>
    <name type="primary">EBNA2</name>
    <name type="ORF">BYRF1</name>
</gene>
<dbReference type="EMBL" id="K03333">
    <property type="protein sequence ID" value="AAA45903.1"/>
    <property type="molecule type" value="Genomic_DNA"/>
</dbReference>
<dbReference type="EMBL" id="V01555">
    <property type="protein sequence ID" value="CAA24877.1"/>
    <property type="status" value="ALT_INIT"/>
    <property type="molecule type" value="Genomic_DNA"/>
</dbReference>
<dbReference type="EMBL" id="AJ507799">
    <property type="protein sequence ID" value="CAD53395.1"/>
    <property type="molecule type" value="Genomic_DNA"/>
</dbReference>
<dbReference type="PIR" id="S42442">
    <property type="entry name" value="S42442"/>
</dbReference>
<dbReference type="PDB" id="2MKR">
    <property type="method" value="NMR"/>
    <property type="chains" value="B=453-465"/>
</dbReference>
<dbReference type="PDB" id="2N2J">
    <property type="method" value="NMR"/>
    <property type="chains" value="A/B=1-58"/>
</dbReference>
<dbReference type="PDB" id="5HDA">
    <property type="method" value="X-ray"/>
    <property type="resolution" value="2.39 A"/>
    <property type="chains" value="B/D=381-389"/>
</dbReference>
<dbReference type="PDBsum" id="2MKR"/>
<dbReference type="PDBsum" id="2N2J"/>
<dbReference type="PDBsum" id="5HDA"/>
<dbReference type="BMRB" id="P12978"/>
<dbReference type="SASBDB" id="P12978"/>
<dbReference type="SMR" id="P12978"/>
<dbReference type="BioGRID" id="971803">
    <property type="interactions" value="7"/>
</dbReference>
<dbReference type="DIP" id="DIP-41174N"/>
<dbReference type="ELM" id="P12978"/>
<dbReference type="IntAct" id="P12978">
    <property type="interactions" value="5"/>
</dbReference>
<dbReference type="MINT" id="P12978"/>
<dbReference type="DNASU" id="3783761"/>
<dbReference type="KEGG" id="vg:3783761"/>
<dbReference type="EvolutionaryTrace" id="P12978"/>
<dbReference type="Proteomes" id="UP000153037">
    <property type="component" value="Segment"/>
</dbReference>
<dbReference type="GO" id="GO:0044204">
    <property type="term" value="C:host cell nuclear matrix"/>
    <property type="evidence" value="ECO:0007669"/>
    <property type="project" value="UniProtKB-SubCell"/>
</dbReference>
<dbReference type="GO" id="GO:0042025">
    <property type="term" value="C:host cell nucleus"/>
    <property type="evidence" value="ECO:0000314"/>
    <property type="project" value="UniProtKB"/>
</dbReference>
<dbReference type="GO" id="GO:0004865">
    <property type="term" value="F:protein serine/threonine phosphatase inhibitor activity"/>
    <property type="evidence" value="ECO:0007669"/>
    <property type="project" value="UniProtKB-KW"/>
</dbReference>
<dbReference type="GO" id="GO:0039695">
    <property type="term" value="P:DNA-templated viral transcription"/>
    <property type="evidence" value="ECO:0000314"/>
    <property type="project" value="UniProtKB"/>
</dbReference>
<dbReference type="GO" id="GO:0045893">
    <property type="term" value="P:positive regulation of DNA-templated transcription"/>
    <property type="evidence" value="ECO:0000314"/>
    <property type="project" value="BHF-UCL"/>
</dbReference>
<dbReference type="GO" id="GO:0044071">
    <property type="term" value="P:symbiont-mediated perturbation of host cell cycle progression"/>
    <property type="evidence" value="ECO:0000314"/>
    <property type="project" value="UniProtKB"/>
</dbReference>
<dbReference type="GO" id="GO:0052026">
    <property type="term" value="P:symbiont-mediated perturbation of host transcription"/>
    <property type="evidence" value="ECO:0000314"/>
    <property type="project" value="UniProtKB"/>
</dbReference>
<dbReference type="GO" id="GO:0052170">
    <property type="term" value="P:symbiont-mediated suppression of host innate immune response"/>
    <property type="evidence" value="ECO:0007669"/>
    <property type="project" value="UniProtKB-KW"/>
</dbReference>
<dbReference type="GO" id="GO:0039606">
    <property type="term" value="P:symbiont-mediated suppression of host translation initiation"/>
    <property type="evidence" value="ECO:0007669"/>
    <property type="project" value="UniProtKB-KW"/>
</dbReference>
<dbReference type="GO" id="GO:0039502">
    <property type="term" value="P:symbiont-mediated suppression of host type I interferon-mediated signaling pathway"/>
    <property type="evidence" value="ECO:0007669"/>
    <property type="project" value="UniProtKB-KW"/>
</dbReference>
<dbReference type="IDEAL" id="IID90021"/>
<dbReference type="PRINTS" id="PR01217">
    <property type="entry name" value="PRICHEXTENSN"/>
</dbReference>
<accession>P12978</accession>
<accession>Q69023</accession>
<accession>Q777H1</accession>
<evidence type="ECO:0000256" key="1">
    <source>
        <dbReference type="SAM" id="MobiDB-lite"/>
    </source>
</evidence>
<evidence type="ECO:0000269" key="2">
    <source>
    </source>
</evidence>
<evidence type="ECO:0000269" key="3">
    <source>
    </source>
</evidence>
<evidence type="ECO:0000269" key="4">
    <source>
    </source>
</evidence>
<evidence type="ECO:0000269" key="5">
    <source>
    </source>
</evidence>
<evidence type="ECO:0000269" key="6">
    <source>
    </source>
</evidence>
<evidence type="ECO:0000269" key="7">
    <source>
    </source>
</evidence>
<evidence type="ECO:0000269" key="8">
    <source>
    </source>
</evidence>
<evidence type="ECO:0000269" key="9">
    <source>
    </source>
</evidence>
<evidence type="ECO:0000269" key="10">
    <source>
    </source>
</evidence>
<evidence type="ECO:0000269" key="11">
    <source>
    </source>
</evidence>
<evidence type="ECO:0000305" key="12"/>
<evidence type="ECO:0007829" key="13">
    <source>
        <dbReference type="PDB" id="2MKR"/>
    </source>
</evidence>
<evidence type="ECO:0007829" key="14">
    <source>
        <dbReference type="PDB" id="2N2J"/>
    </source>
</evidence>
<keyword id="KW-0002">3D-structure</keyword>
<keyword id="KW-0010">Activator</keyword>
<keyword id="KW-1048">Host nucleus</keyword>
<keyword id="KW-0945">Host-virus interaction</keyword>
<keyword id="KW-1090">Inhibition of host innate immune response by virus</keyword>
<keyword id="KW-1114">Inhibition of host interferon signaling pathway by virus</keyword>
<keyword id="KW-0922">Interferon antiviral system evasion</keyword>
<keyword id="KW-1121">Modulation of host cell cycle by virus</keyword>
<keyword id="KW-1126">Modulation of host PP1 activity by virus</keyword>
<keyword id="KW-0597">Phosphoprotein</keyword>
<keyword id="KW-1185">Reference proteome</keyword>
<keyword id="KW-0677">Repeat</keyword>
<keyword id="KW-0804">Transcription</keyword>
<keyword id="KW-0805">Transcription regulation</keyword>
<keyword id="KW-0899">Viral immunoevasion</keyword>
<protein>
    <recommendedName>
        <fullName>Epstein-Barr nuclear antigen 2</fullName>
        <shortName>EBNA-2</shortName>
        <shortName>EBV nuclear antigen 2</shortName>
    </recommendedName>
</protein>
<reference key="1">
    <citation type="journal article" date="1984" name="Proc. Natl. Acad. Sci. U.S.A.">
        <title>U2 region of Epstein-Barr virus DNA may encode Epstein-Barr nuclear antigen 2.</title>
        <authorList>
            <person name="Dambaugh T."/>
            <person name="Hennessy K."/>
            <person name="Chamnankit L."/>
            <person name="Kieff E."/>
        </authorList>
    </citation>
    <scope>NUCLEOTIDE SEQUENCE [GENOMIC DNA]</scope>
</reference>
<reference key="2">
    <citation type="journal article" date="1984" name="Nature">
        <title>DNA sequence and expression of the B95-8 Epstein-Barr virus genome.</title>
        <authorList>
            <person name="Baer R."/>
            <person name="Bankier A.T."/>
            <person name="Biggin M.D."/>
            <person name="Deininger P.L."/>
            <person name="Farrell P.J."/>
            <person name="Gibson T.J."/>
            <person name="Hatfull G."/>
            <person name="Hudson G.S."/>
            <person name="Satchwell S.C."/>
            <person name="Seguin C."/>
            <person name="Tuffnell P.S."/>
            <person name="Barrell B.G."/>
        </authorList>
    </citation>
    <scope>NUCLEOTIDE SEQUENCE [LARGE SCALE GENOMIC DNA]</scope>
</reference>
<reference key="3">
    <citation type="journal article" date="1990" name="Virology">
        <title>Subnuclear localization and phosphorylation of Epstein-Barr virus latent infection nuclear proteins.</title>
        <authorList>
            <person name="Petti L."/>
            <person name="Sample C."/>
            <person name="Kieff E."/>
        </authorList>
    </citation>
    <scope>SUBCELLULAR LOCATION</scope>
    <scope>PHOSPHORYLATION</scope>
</reference>
<reference key="4">
    <citation type="journal article" date="1991" name="J. Virol.">
        <title>Epstein-Barr virus nuclear protein 2 mutations define essential domains for transformation and transactivation.</title>
        <authorList>
            <person name="Cohen J.I."/>
            <person name="Wang F."/>
            <person name="Kieff E."/>
        </authorList>
    </citation>
    <scope>DOMAINS</scope>
</reference>
<reference key="5">
    <citation type="journal article" date="1994" name="Science">
        <title>Mediation of Epstein-Barr virus EBNA2 transactivation by recombination signal-binding protein J kappa.</title>
        <authorList>
            <person name="Henkel T."/>
            <person name="Ling P.D."/>
            <person name="Hayward S.D."/>
            <person name="Peterson M.G."/>
        </authorList>
    </citation>
    <scope>INTERACTION WITH HUMAN CBF1</scope>
</reference>
<reference key="6">
    <citation type="journal article" date="1995" name="Proc. Natl. Acad. Sci. U.S.A.">
        <title>The 62- and 80-kDa subunits of transcription factor IIH mediate the interaction with Epstein-Barr virus nuclear protein 2.</title>
        <authorList>
            <person name="Tong X."/>
            <person name="Drapkin R."/>
            <person name="Reinberg D."/>
            <person name="Kieff E."/>
        </authorList>
    </citation>
    <scope>INTERACTION WITH HUMAN ERCC2 AND ERCC3</scope>
</reference>
<reference key="7">
    <citation type="journal article" date="1995" name="J. Virol.">
        <title>The Epstein-Barr virus nuclear protein 2 acidic domain can interact with TFIIB, TAF40, and RPA70 but not with TATA-binding protein.</title>
        <authorList>
            <person name="Tong X."/>
            <person name="Wang F."/>
            <person name="Thut C.J."/>
            <person name="Kieff E."/>
        </authorList>
    </citation>
    <scope>INTERACTION WITH HUMAN GTF2B</scope>
</reference>
<reference key="8">
    <citation type="journal article" date="1996" name="J. Virol.">
        <title>Epstein-Barr virus nuclear protein 2 (EBNA2) binds to a component of the human SNF-SWI complex, hSNF5/Ini1.</title>
        <authorList>
            <person name="Wu D.Y."/>
            <person name="Kalpana G.V."/>
            <person name="Goff S.P."/>
            <person name="Schubach W.H."/>
        </authorList>
    </citation>
    <scope>INTERACTION WITH HUMAN SMARCB1/INI1</scope>
</reference>
<reference key="9">
    <citation type="journal article" date="2002" name="J. Biol. Chem.">
        <title>The conserved Mynd domain of BS69 binds cellular and oncoviral proteins through a common PXLXP motif.</title>
        <authorList>
            <person name="Ansieau S."/>
            <person name="Leutz A."/>
        </authorList>
    </citation>
    <scope>INTERACTION WITH HUMAN ZMYND11/BS69</scope>
    <scope>MUTAGENESIS OF LEU-385 AND LEU-439</scope>
</reference>
<reference key="10">
    <citation type="journal article" date="2004" name="Exp. Cell Res.">
        <title>Identification and cloning of a novel chromatin-associated protein partner of Epstein-Barr nuclear protein 2.</title>
        <authorList>
            <person name="Kwiatkowski B.A."/>
            <person name="Ragoczy T."/>
            <person name="Ehly J."/>
            <person name="Schubach W.H."/>
        </authorList>
    </citation>
    <scope>INTERACTION WITH HUMAN WAPL</scope>
</reference>
<reference key="11">
    <citation type="journal article" date="2009" name="Carcinogenesis">
        <title>Epstein-Barr virus nuclear antigen 2 disrupts mitotic checkpoint and causes chromosomal instability.</title>
        <authorList>
            <person name="Pan S.H."/>
            <person name="Tai C.C."/>
            <person name="Lin C.S."/>
            <person name="Hsu W.B."/>
            <person name="Chou S.F."/>
            <person name="Lai C.C."/>
            <person name="Chen J.Y."/>
            <person name="Tien H.F."/>
            <person name="Lee F.Y."/>
            <person name="Wang W.B."/>
        </authorList>
    </citation>
    <scope>FUNCTION</scope>
</reference>
<reference key="12">
    <citation type="journal article" date="2017" name="PLoS Pathog.">
        <title>EBF1 binds to EBNA2 and promotes the assembly of EBNA2 chromatin complexes in B cells.</title>
        <authorList>
            <person name="Glaser L.V."/>
            <person name="Rieger S."/>
            <person name="Thumann S."/>
            <person name="Beer S."/>
            <person name="Kuklik-Roos C."/>
            <person name="Martin D.E."/>
            <person name="Maier K.C."/>
            <person name="Harth-Hertle M.L."/>
            <person name="Gruening B."/>
            <person name="Backofen R."/>
            <person name="Krebs S."/>
            <person name="Blum H."/>
            <person name="Zimmer R."/>
            <person name="Erhard F."/>
            <person name="Kempkes B."/>
        </authorList>
    </citation>
    <scope>FUNCTION</scope>
    <scope>INTERACTION WITH HOST EBF1</scope>
</reference>
<reference key="13">
    <citation type="journal article" date="2016" name="PLoS Pathog.">
        <title>BS69/ZMYND11 C-Terminal Domains Bind and Inhibit EBNA2.</title>
        <authorList>
            <person name="Harter M.R."/>
            <person name="Liu C.D."/>
            <person name="Shen C.L."/>
            <person name="Gonzalez-Hurtado E."/>
            <person name="Zhang Z.M."/>
            <person name="Xu M."/>
            <person name="Martinez E."/>
            <person name="Peng C.W."/>
            <person name="Song J."/>
        </authorList>
    </citation>
    <scope>X-RAY CRYSTALLOGRAPHY (2.39 ANGSTROMS) OF 381-389</scope>
    <scope>INTERACTION WITH HUMAN ZMYND11/BS69</scope>
    <scope>FUNCTION</scope>
</reference>
<sequence length="487" mass="52545">MPTFYLALHGGQTYHLIVDTDSLGNPSLSVIPSNPYQEQLSDTPLIPLTIFVGENTGVPPPLPPPPPPPPPPPPPPPPPPPPPPPPPPSPPPPPPPPPPPQRRDAWTQEPSPLDRDPLGYDVGHGPLASAMRMLWMANYIVRQSRGDRGLILPQGPQTAPQARLVQPHVPPLRPTAPTILSPLSQPRLTPPQPLMMPPRPTPPTPLPPATLTVPPRPTRPTTLPPTPLLTVLQRPTELQPTPSPPRMHLPVLHVPDQSMHPLTHQSTPNDPDSPEPRSPTVFYNIPPMPLPPSQLPPPAAPAQPPPGVINDQQLHHLPSGPPWWPPICDPPQPSKTQGQSRGQSRGRGRGRGRGRGKGKSRDKQRKPGGPWRPEPNTSSPSMPELSPVLGLHQGQGAGDSPTPGPSNAAPVCRNSHTATPNVSPIHEPESHNSPEAPILFPDDWYPPSIDPADLDESWDYIFETTESPSSDEDYVEGPSKRPRPSIQ</sequence>
<organismHost>
    <name type="scientific">Homo sapiens</name>
    <name type="common">Human</name>
    <dbReference type="NCBI Taxonomy" id="9606"/>
</organismHost>
<comment type="function">
    <text evidence="4 6 7">Plays a key role in the activation of the host resting B-cell and stimulation of B-cell proliferation. Acts by up-regulating the expression of viral EBNA1-6, LMP1, LMP2A and LMP2B genes, as well as several host genes including CD21, CD23 and MYC. Activates transcription by acting as an adapter molecule that binds to cellular sequence-specific DNA-binding proteins such as host CBF1, SMARCB1 and SPI1. Once EBNA2 is near promoter sites, its acidic activating domain recruits basal and activation-associated transcription factors TFIIB, TAF40, TFIIH components ERCC2 and ERCC3, and CBP in order to promote transcription. Alternatively, EBNA2 can affect activities of cell cycle regulators and retard cell cycle progression at G2/M phase. It also induces chromosomal instability, by disrupting mitotic checkpoints, multi-nucleation and formation of micronuclei in infected cells.</text>
</comment>
<comment type="subunit">
    <text evidence="2 3 6 7 8 9 10 11">Interacts with human SMARCB1/INI1, presumably generating an open chromatin conformation at the EBNA2-responsive target genes (PubMed:8709224). Interacts with human WAPL (PubMed:15383329). Interacts with host CBF1; this interaction allows transcriptional activation by EBNA2 (PubMed:8016657). Interacts with host general transcription factors GTF2B, ERCC2 and ERCC3 (PubMed:7724549, PubMed:7983760). Interacts (via PXLXP motif) with host ZMYND11/BS69 (via MYND-type zinc finger) (PubMed:11733528, PubMed:26845565). Interacts with host EBF1 (PubMed:28968461).</text>
</comment>
<comment type="interaction">
    <interactant intactId="EBI-8052923">
        <id>P12978</id>
    </interactant>
    <interactant intactId="EBI-632552">
        <id>Q06330</id>
        <label>RBPJ</label>
    </interactant>
    <organismsDiffer>true</organismsDiffer>
    <experiments>2</experiments>
</comment>
<comment type="interaction">
    <interactant intactId="EBI-8052923">
        <id>P12978</id>
    </interactant>
    <interactant intactId="EBI-2623509">
        <id>Q15326</id>
        <label>ZMYND11</label>
    </interactant>
    <organismsDiffer>true</organismsDiffer>
    <experiments>2</experiments>
</comment>
<comment type="subcellular location">
    <subcellularLocation>
        <location evidence="5">Host nucleus matrix</location>
    </subcellularLocation>
    <text>Associated with the nuclear matrix.</text>
</comment>
<comment type="PTM">
    <text evidence="5">Phosphorylated.</text>
</comment>
<comment type="similarity">
    <text evidence="12">Belongs to the herpesviridae EBNA2 family.</text>
</comment>
<comment type="sequence caution" evidence="12">
    <conflict type="erroneous initiation">
        <sequence resource="EMBL-CDS" id="CAA24877"/>
    </conflict>
</comment>
<name>EBNA2_EBVB9</name>
<organism>
    <name type="scientific">Epstein-Barr virus (strain B95-8)</name>
    <name type="common">HHV-4</name>
    <name type="synonym">Human herpesvirus 4</name>
    <dbReference type="NCBI Taxonomy" id="10377"/>
    <lineage>
        <taxon>Viruses</taxon>
        <taxon>Duplodnaviria</taxon>
        <taxon>Heunggongvirae</taxon>
        <taxon>Peploviricota</taxon>
        <taxon>Herviviricetes</taxon>
        <taxon>Herpesvirales</taxon>
        <taxon>Orthoherpesviridae</taxon>
        <taxon>Gammaherpesvirinae</taxon>
        <taxon>Lymphocryptovirus</taxon>
        <taxon>Lymphocryptovirus humangamma4</taxon>
        <taxon>Epstein-Barr virus (strain GD1)</taxon>
    </lineage>
</organism>
<feature type="chain" id="PRO_0000116176" description="Epstein-Barr nuclear antigen 2">
    <location>
        <begin position="1"/>
        <end position="487"/>
    </location>
</feature>
<feature type="repeat" description="1">
    <location>
        <begin position="345"/>
        <end position="346"/>
    </location>
</feature>
<feature type="repeat" description="2">
    <location>
        <begin position="347"/>
        <end position="348"/>
    </location>
</feature>
<feature type="repeat" description="3">
    <location>
        <begin position="349"/>
        <end position="350"/>
    </location>
</feature>
<feature type="repeat" description="4">
    <location>
        <begin position="351"/>
        <end position="352"/>
    </location>
</feature>
<feature type="repeat" description="5">
    <location>
        <begin position="353"/>
        <end position="354"/>
    </location>
</feature>
<feature type="repeat" description="6">
    <location>
        <begin position="355"/>
        <end position="356"/>
    </location>
</feature>
<feature type="repeat" description="7">
    <location>
        <begin position="357"/>
        <end position="358"/>
    </location>
</feature>
<feature type="region of interest" description="SMARCB1/INI1 binding">
    <location>
        <begin position="1"/>
        <end position="210"/>
    </location>
</feature>
<feature type="region of interest" description="Disordered" evidence="1">
    <location>
        <begin position="52"/>
        <end position="121"/>
    </location>
</feature>
<feature type="region of interest" description="Disordered" evidence="1">
    <location>
        <begin position="258"/>
        <end position="487"/>
    </location>
</feature>
<feature type="region of interest" description="6.5 X 2 AA tandem repeats of R-G">
    <location>
        <begin position="345"/>
        <end position="358"/>
    </location>
</feature>
<feature type="short sequence motif" description="PXLXP motif, interaction with host ZMYND11">
    <location>
        <begin position="383"/>
        <end position="387"/>
    </location>
</feature>
<feature type="short sequence motif" description="PXLXP motif, interaction with host ZMYND11">
    <location>
        <begin position="437"/>
        <end position="441"/>
    </location>
</feature>
<feature type="compositionally biased region" description="Pro residues" evidence="1">
    <location>
        <begin position="58"/>
        <end position="100"/>
    </location>
</feature>
<feature type="compositionally biased region" description="Basic and acidic residues" evidence="1">
    <location>
        <begin position="101"/>
        <end position="118"/>
    </location>
</feature>
<feature type="compositionally biased region" description="Pro residues" evidence="1">
    <location>
        <begin position="286"/>
        <end position="307"/>
    </location>
</feature>
<feature type="compositionally biased region" description="Pro residues" evidence="1">
    <location>
        <begin position="319"/>
        <end position="333"/>
    </location>
</feature>
<feature type="compositionally biased region" description="Basic residues" evidence="1">
    <location>
        <begin position="344"/>
        <end position="366"/>
    </location>
</feature>
<feature type="mutagenesis site" description="Complete loss of interaction with host ZMYND11." evidence="2">
    <original>L</original>
    <variation>A</variation>
    <location>
        <position position="385"/>
    </location>
</feature>
<feature type="mutagenesis site" description="Complete loss of interaction with host ZMYND11." evidence="2">
    <original>L</original>
    <variation>A</variation>
    <location>
        <position position="439"/>
    </location>
</feature>
<feature type="sequence conflict" description="In Ref. 1; AAA45903." evidence="12" ref="1">
    <original>P</original>
    <variation>PPPP</variation>
    <location>
        <position position="88"/>
    </location>
</feature>
<feature type="strand" evidence="14">
    <location>
        <begin position="3"/>
        <end position="9"/>
    </location>
</feature>
<feature type="strand" evidence="14">
    <location>
        <begin position="12"/>
        <end position="20"/>
    </location>
</feature>
<feature type="strand" evidence="14">
    <location>
        <begin position="26"/>
        <end position="34"/>
    </location>
</feature>
<feature type="helix" evidence="14">
    <location>
        <begin position="36"/>
        <end position="39"/>
    </location>
</feature>
<feature type="strand" evidence="14">
    <location>
        <begin position="45"/>
        <end position="52"/>
    </location>
</feature>
<feature type="helix" evidence="13">
    <location>
        <begin position="455"/>
        <end position="463"/>
    </location>
</feature>
<proteinExistence type="evidence at protein level"/>